<feature type="chain" id="PRO_1000062619" description="Acetyl-coenzyme A carboxylase carboxyl transferase subunit alpha">
    <location>
        <begin position="1"/>
        <end position="315"/>
    </location>
</feature>
<feature type="domain" description="CoA carboxyltransferase C-terminal" evidence="2">
    <location>
        <begin position="36"/>
        <end position="289"/>
    </location>
</feature>
<protein>
    <recommendedName>
        <fullName evidence="1">Acetyl-coenzyme A carboxylase carboxyl transferase subunit alpha</fullName>
        <shortName evidence="1">ACCase subunit alpha</shortName>
        <shortName evidence="1">Acetyl-CoA carboxylase carboxyltransferase subunit alpha</shortName>
        <ecNumber evidence="1">2.1.3.15</ecNumber>
    </recommendedName>
</protein>
<dbReference type="EC" id="2.1.3.15" evidence="1"/>
<dbReference type="EMBL" id="AM286280">
    <property type="protein sequence ID" value="CAL09514.1"/>
    <property type="molecule type" value="Genomic_DNA"/>
</dbReference>
<dbReference type="RefSeq" id="WP_003022368.1">
    <property type="nucleotide sequence ID" value="NC_008245.1"/>
</dbReference>
<dbReference type="SMR" id="Q14GB2"/>
<dbReference type="KEGG" id="ftf:FTF1498c"/>
<dbReference type="HOGENOM" id="CLU_015486_0_2_6"/>
<dbReference type="UniPathway" id="UPA00655">
    <property type="reaction ID" value="UER00711"/>
</dbReference>
<dbReference type="GO" id="GO:0009317">
    <property type="term" value="C:acetyl-CoA carboxylase complex"/>
    <property type="evidence" value="ECO:0007669"/>
    <property type="project" value="InterPro"/>
</dbReference>
<dbReference type="GO" id="GO:0003989">
    <property type="term" value="F:acetyl-CoA carboxylase activity"/>
    <property type="evidence" value="ECO:0007669"/>
    <property type="project" value="InterPro"/>
</dbReference>
<dbReference type="GO" id="GO:0005524">
    <property type="term" value="F:ATP binding"/>
    <property type="evidence" value="ECO:0007669"/>
    <property type="project" value="UniProtKB-KW"/>
</dbReference>
<dbReference type="GO" id="GO:0016743">
    <property type="term" value="F:carboxyl- or carbamoyltransferase activity"/>
    <property type="evidence" value="ECO:0007669"/>
    <property type="project" value="UniProtKB-UniRule"/>
</dbReference>
<dbReference type="GO" id="GO:0006633">
    <property type="term" value="P:fatty acid biosynthetic process"/>
    <property type="evidence" value="ECO:0007669"/>
    <property type="project" value="UniProtKB-KW"/>
</dbReference>
<dbReference type="GO" id="GO:2001295">
    <property type="term" value="P:malonyl-CoA biosynthetic process"/>
    <property type="evidence" value="ECO:0007669"/>
    <property type="project" value="UniProtKB-UniRule"/>
</dbReference>
<dbReference type="Gene3D" id="3.90.226.10">
    <property type="entry name" value="2-enoyl-CoA Hydratase, Chain A, domain 1"/>
    <property type="match status" value="1"/>
</dbReference>
<dbReference type="HAMAP" id="MF_00823">
    <property type="entry name" value="AcetylCoA_CT_alpha"/>
    <property type="match status" value="1"/>
</dbReference>
<dbReference type="InterPro" id="IPR001095">
    <property type="entry name" value="Acetyl_CoA_COase_a_su"/>
</dbReference>
<dbReference type="InterPro" id="IPR029045">
    <property type="entry name" value="ClpP/crotonase-like_dom_sf"/>
</dbReference>
<dbReference type="InterPro" id="IPR011763">
    <property type="entry name" value="COA_CT_C"/>
</dbReference>
<dbReference type="NCBIfam" id="TIGR00513">
    <property type="entry name" value="accA"/>
    <property type="match status" value="1"/>
</dbReference>
<dbReference type="NCBIfam" id="NF041504">
    <property type="entry name" value="AccA_sub"/>
    <property type="match status" value="1"/>
</dbReference>
<dbReference type="NCBIfam" id="NF004344">
    <property type="entry name" value="PRK05724.1"/>
    <property type="match status" value="1"/>
</dbReference>
<dbReference type="PANTHER" id="PTHR42853">
    <property type="entry name" value="ACETYL-COENZYME A CARBOXYLASE CARBOXYL TRANSFERASE SUBUNIT ALPHA"/>
    <property type="match status" value="1"/>
</dbReference>
<dbReference type="PANTHER" id="PTHR42853:SF3">
    <property type="entry name" value="ACETYL-COENZYME A CARBOXYLASE CARBOXYL TRANSFERASE SUBUNIT ALPHA, CHLOROPLASTIC"/>
    <property type="match status" value="1"/>
</dbReference>
<dbReference type="Pfam" id="PF03255">
    <property type="entry name" value="ACCA"/>
    <property type="match status" value="1"/>
</dbReference>
<dbReference type="PRINTS" id="PR01069">
    <property type="entry name" value="ACCCTRFRASEA"/>
</dbReference>
<dbReference type="SUPFAM" id="SSF52096">
    <property type="entry name" value="ClpP/crotonase"/>
    <property type="match status" value="1"/>
</dbReference>
<dbReference type="PROSITE" id="PS50989">
    <property type="entry name" value="COA_CT_CTER"/>
    <property type="match status" value="1"/>
</dbReference>
<keyword id="KW-0067">ATP-binding</keyword>
<keyword id="KW-0963">Cytoplasm</keyword>
<keyword id="KW-0275">Fatty acid biosynthesis</keyword>
<keyword id="KW-0276">Fatty acid metabolism</keyword>
<keyword id="KW-0444">Lipid biosynthesis</keyword>
<keyword id="KW-0443">Lipid metabolism</keyword>
<keyword id="KW-0547">Nucleotide-binding</keyword>
<keyword id="KW-0808">Transferase</keyword>
<evidence type="ECO:0000255" key="1">
    <source>
        <dbReference type="HAMAP-Rule" id="MF_00823"/>
    </source>
</evidence>
<evidence type="ECO:0000255" key="2">
    <source>
        <dbReference type="PROSITE-ProRule" id="PRU01137"/>
    </source>
</evidence>
<gene>
    <name evidence="1" type="primary">accA</name>
    <name type="ordered locus">FTF1498c</name>
</gene>
<sequence>MNYLDFESKIKEIEDKITSLSHVFEDEKTEVEIKKLSKKRLELMESTYSKLTDWQVVQLSRHPDRPYFKDLLPLIFTDFQELHGDRTFGDDLAVIGGLAKLNNKPVMVIGQEKGRDTKSKIKHNFGMMHPEGYRKALRLMKLAEKFNMPVVTFIDTPGAYPGIKAEERGQSEAIARNLLEMSALKVPVVCIVIGEGCSGGALGIGVGDRLLMLQYSYFATISPEGCASILHKTAEKASEVTQMMNITSGRLKELKIVDEVIPEPLGGAHRDYETTATNIRKAVAAELKILSEMTVEQRNSRRYDKLMSFGRFKEA</sequence>
<name>ACCA_FRAT1</name>
<reference key="1">
    <citation type="journal article" date="2007" name="PLoS ONE">
        <title>Genome sequencing shows that European isolates of Francisella tularensis subspecies tularensis are almost identical to US laboratory strain Schu S4.</title>
        <authorList>
            <person name="Chaudhuri R.R."/>
            <person name="Ren C.-P."/>
            <person name="Desmond L."/>
            <person name="Vincent G.A."/>
            <person name="Silman N.J."/>
            <person name="Brehm J.K."/>
            <person name="Elmore M.J."/>
            <person name="Hudson M.J."/>
            <person name="Forsman M."/>
            <person name="Isherwood K.E."/>
            <person name="Gurycova D."/>
            <person name="Minton N.P."/>
            <person name="Titball R.W."/>
            <person name="Pallen M.J."/>
            <person name="Vipond R."/>
        </authorList>
    </citation>
    <scope>NUCLEOTIDE SEQUENCE [LARGE SCALE GENOMIC DNA]</scope>
    <source>
        <strain>FSC 198</strain>
    </source>
</reference>
<accession>Q14GB2</accession>
<comment type="function">
    <text evidence="1">Component of the acetyl coenzyme A carboxylase (ACC) complex. First, biotin carboxylase catalyzes the carboxylation of biotin on its carrier protein (BCCP) and then the CO(2) group is transferred by the carboxyltransferase to acetyl-CoA to form malonyl-CoA.</text>
</comment>
<comment type="catalytic activity">
    <reaction evidence="1">
        <text>N(6)-carboxybiotinyl-L-lysyl-[protein] + acetyl-CoA = N(6)-biotinyl-L-lysyl-[protein] + malonyl-CoA</text>
        <dbReference type="Rhea" id="RHEA:54728"/>
        <dbReference type="Rhea" id="RHEA-COMP:10505"/>
        <dbReference type="Rhea" id="RHEA-COMP:10506"/>
        <dbReference type="ChEBI" id="CHEBI:57288"/>
        <dbReference type="ChEBI" id="CHEBI:57384"/>
        <dbReference type="ChEBI" id="CHEBI:83144"/>
        <dbReference type="ChEBI" id="CHEBI:83145"/>
        <dbReference type="EC" id="2.1.3.15"/>
    </reaction>
</comment>
<comment type="pathway">
    <text evidence="1">Lipid metabolism; malonyl-CoA biosynthesis; malonyl-CoA from acetyl-CoA: step 1/1.</text>
</comment>
<comment type="subunit">
    <text evidence="1">Acetyl-CoA carboxylase is a heterohexamer composed of biotin carboxyl carrier protein (AccB), biotin carboxylase (AccC) and two subunits each of ACCase subunit alpha (AccA) and ACCase subunit beta (AccD).</text>
</comment>
<comment type="subcellular location">
    <subcellularLocation>
        <location evidence="1">Cytoplasm</location>
    </subcellularLocation>
</comment>
<comment type="similarity">
    <text evidence="1">Belongs to the AccA family.</text>
</comment>
<organism>
    <name type="scientific">Francisella tularensis subsp. tularensis (strain FSC 198)</name>
    <dbReference type="NCBI Taxonomy" id="393115"/>
    <lineage>
        <taxon>Bacteria</taxon>
        <taxon>Pseudomonadati</taxon>
        <taxon>Pseudomonadota</taxon>
        <taxon>Gammaproteobacteria</taxon>
        <taxon>Thiotrichales</taxon>
        <taxon>Francisellaceae</taxon>
        <taxon>Francisella</taxon>
    </lineage>
</organism>
<proteinExistence type="inferred from homology"/>